<gene>
    <name evidence="1" type="primary">ispD</name>
    <name type="ordered locus">ECS88_3017</name>
</gene>
<sequence>MATTHLDVCAVVPAAGFGRRMQTECPKQYLSIGNQTILEHSVHALLAHPRVKRVVIAISPGDSRFAQLPLANHPRITVVDGGEERADSVLAGLKAAGDAQWVLVHDAARPCLHQDDLARLLALSETSRTGGILAAPVRDTMKRAEPGKNAIAHTVDRNGLWHALTPQFFPRELLHDCLTRALNEGATITDEASALEYCGFHPQLVEGRADNIKVTRPEDLALAEFYLTRTIHQENT</sequence>
<name>ISPD_ECO45</name>
<dbReference type="EC" id="2.7.7.60" evidence="1"/>
<dbReference type="EMBL" id="CU928161">
    <property type="protein sequence ID" value="CAR04262.1"/>
    <property type="molecule type" value="Genomic_DNA"/>
</dbReference>
<dbReference type="RefSeq" id="WP_000246149.1">
    <property type="nucleotide sequence ID" value="NC_011742.1"/>
</dbReference>
<dbReference type="SMR" id="B7MKM1"/>
<dbReference type="KEGG" id="ecz:ECS88_3017"/>
<dbReference type="HOGENOM" id="CLU_061281_3_1_6"/>
<dbReference type="UniPathway" id="UPA00056">
    <property type="reaction ID" value="UER00093"/>
</dbReference>
<dbReference type="Proteomes" id="UP000000747">
    <property type="component" value="Chromosome"/>
</dbReference>
<dbReference type="GO" id="GO:0050518">
    <property type="term" value="F:2-C-methyl-D-erythritol 4-phosphate cytidylyltransferase activity"/>
    <property type="evidence" value="ECO:0007669"/>
    <property type="project" value="UniProtKB-UniRule"/>
</dbReference>
<dbReference type="GO" id="GO:0019288">
    <property type="term" value="P:isopentenyl diphosphate biosynthetic process, methylerythritol 4-phosphate pathway"/>
    <property type="evidence" value="ECO:0007669"/>
    <property type="project" value="UniProtKB-UniRule"/>
</dbReference>
<dbReference type="CDD" id="cd02516">
    <property type="entry name" value="CDP-ME_synthetase"/>
    <property type="match status" value="1"/>
</dbReference>
<dbReference type="FunFam" id="3.90.550.10:FF:000003">
    <property type="entry name" value="2-C-methyl-D-erythritol 4-phosphate cytidylyltransferase"/>
    <property type="match status" value="1"/>
</dbReference>
<dbReference type="Gene3D" id="3.90.550.10">
    <property type="entry name" value="Spore Coat Polysaccharide Biosynthesis Protein SpsA, Chain A"/>
    <property type="match status" value="1"/>
</dbReference>
<dbReference type="HAMAP" id="MF_00108">
    <property type="entry name" value="IspD"/>
    <property type="match status" value="1"/>
</dbReference>
<dbReference type="InterPro" id="IPR001228">
    <property type="entry name" value="IspD"/>
</dbReference>
<dbReference type="InterPro" id="IPR034683">
    <property type="entry name" value="IspD/TarI"/>
</dbReference>
<dbReference type="InterPro" id="IPR050088">
    <property type="entry name" value="IspD/TarI_cytidylyltransf_bact"/>
</dbReference>
<dbReference type="InterPro" id="IPR018294">
    <property type="entry name" value="ISPD_synthase_CS"/>
</dbReference>
<dbReference type="InterPro" id="IPR029044">
    <property type="entry name" value="Nucleotide-diphossugar_trans"/>
</dbReference>
<dbReference type="NCBIfam" id="TIGR00453">
    <property type="entry name" value="ispD"/>
    <property type="match status" value="1"/>
</dbReference>
<dbReference type="PANTHER" id="PTHR32125">
    <property type="entry name" value="2-C-METHYL-D-ERYTHRITOL 4-PHOSPHATE CYTIDYLYLTRANSFERASE, CHLOROPLASTIC"/>
    <property type="match status" value="1"/>
</dbReference>
<dbReference type="PANTHER" id="PTHR32125:SF4">
    <property type="entry name" value="2-C-METHYL-D-ERYTHRITOL 4-PHOSPHATE CYTIDYLYLTRANSFERASE, CHLOROPLASTIC"/>
    <property type="match status" value="1"/>
</dbReference>
<dbReference type="Pfam" id="PF01128">
    <property type="entry name" value="IspD"/>
    <property type="match status" value="1"/>
</dbReference>
<dbReference type="SUPFAM" id="SSF53448">
    <property type="entry name" value="Nucleotide-diphospho-sugar transferases"/>
    <property type="match status" value="1"/>
</dbReference>
<dbReference type="PROSITE" id="PS01295">
    <property type="entry name" value="ISPD"/>
    <property type="match status" value="1"/>
</dbReference>
<proteinExistence type="inferred from homology"/>
<reference key="1">
    <citation type="journal article" date="2009" name="PLoS Genet.">
        <title>Organised genome dynamics in the Escherichia coli species results in highly diverse adaptive paths.</title>
        <authorList>
            <person name="Touchon M."/>
            <person name="Hoede C."/>
            <person name="Tenaillon O."/>
            <person name="Barbe V."/>
            <person name="Baeriswyl S."/>
            <person name="Bidet P."/>
            <person name="Bingen E."/>
            <person name="Bonacorsi S."/>
            <person name="Bouchier C."/>
            <person name="Bouvet O."/>
            <person name="Calteau A."/>
            <person name="Chiapello H."/>
            <person name="Clermont O."/>
            <person name="Cruveiller S."/>
            <person name="Danchin A."/>
            <person name="Diard M."/>
            <person name="Dossat C."/>
            <person name="Karoui M.E."/>
            <person name="Frapy E."/>
            <person name="Garry L."/>
            <person name="Ghigo J.M."/>
            <person name="Gilles A.M."/>
            <person name="Johnson J."/>
            <person name="Le Bouguenec C."/>
            <person name="Lescat M."/>
            <person name="Mangenot S."/>
            <person name="Martinez-Jehanne V."/>
            <person name="Matic I."/>
            <person name="Nassif X."/>
            <person name="Oztas S."/>
            <person name="Petit M.A."/>
            <person name="Pichon C."/>
            <person name="Rouy Z."/>
            <person name="Ruf C.S."/>
            <person name="Schneider D."/>
            <person name="Tourret J."/>
            <person name="Vacherie B."/>
            <person name="Vallenet D."/>
            <person name="Medigue C."/>
            <person name="Rocha E.P.C."/>
            <person name="Denamur E."/>
        </authorList>
    </citation>
    <scope>NUCLEOTIDE SEQUENCE [LARGE SCALE GENOMIC DNA]</scope>
    <source>
        <strain>S88 / ExPEC</strain>
    </source>
</reference>
<organism>
    <name type="scientific">Escherichia coli O45:K1 (strain S88 / ExPEC)</name>
    <dbReference type="NCBI Taxonomy" id="585035"/>
    <lineage>
        <taxon>Bacteria</taxon>
        <taxon>Pseudomonadati</taxon>
        <taxon>Pseudomonadota</taxon>
        <taxon>Gammaproteobacteria</taxon>
        <taxon>Enterobacterales</taxon>
        <taxon>Enterobacteriaceae</taxon>
        <taxon>Escherichia</taxon>
    </lineage>
</organism>
<keyword id="KW-0414">Isoprene biosynthesis</keyword>
<keyword id="KW-0548">Nucleotidyltransferase</keyword>
<keyword id="KW-1185">Reference proteome</keyword>
<keyword id="KW-0808">Transferase</keyword>
<protein>
    <recommendedName>
        <fullName evidence="1">2-C-methyl-D-erythritol 4-phosphate cytidylyltransferase</fullName>
        <ecNumber evidence="1">2.7.7.60</ecNumber>
    </recommendedName>
    <alternativeName>
        <fullName evidence="1">4-diphosphocytidyl-2C-methyl-D-erythritol synthase</fullName>
    </alternativeName>
    <alternativeName>
        <fullName evidence="1">MEP cytidylyltransferase</fullName>
        <shortName evidence="1">MCT</shortName>
    </alternativeName>
</protein>
<comment type="function">
    <text evidence="1">Catalyzes the formation of 4-diphosphocytidyl-2-C-methyl-D-erythritol from CTP and 2-C-methyl-D-erythritol 4-phosphate (MEP).</text>
</comment>
<comment type="catalytic activity">
    <reaction evidence="1">
        <text>2-C-methyl-D-erythritol 4-phosphate + CTP + H(+) = 4-CDP-2-C-methyl-D-erythritol + diphosphate</text>
        <dbReference type="Rhea" id="RHEA:13429"/>
        <dbReference type="ChEBI" id="CHEBI:15378"/>
        <dbReference type="ChEBI" id="CHEBI:33019"/>
        <dbReference type="ChEBI" id="CHEBI:37563"/>
        <dbReference type="ChEBI" id="CHEBI:57823"/>
        <dbReference type="ChEBI" id="CHEBI:58262"/>
        <dbReference type="EC" id="2.7.7.60"/>
    </reaction>
</comment>
<comment type="pathway">
    <text evidence="1">Isoprenoid biosynthesis; isopentenyl diphosphate biosynthesis via DXP pathway; isopentenyl diphosphate from 1-deoxy-D-xylulose 5-phosphate: step 2/6.</text>
</comment>
<comment type="subunit">
    <text evidence="1">Homodimer.</text>
</comment>
<comment type="similarity">
    <text evidence="1">Belongs to the IspD/TarI cytidylyltransferase family. IspD subfamily.</text>
</comment>
<evidence type="ECO:0000255" key="1">
    <source>
        <dbReference type="HAMAP-Rule" id="MF_00108"/>
    </source>
</evidence>
<accession>B7MKM1</accession>
<feature type="chain" id="PRO_1000117439" description="2-C-methyl-D-erythritol 4-phosphate cytidylyltransferase">
    <location>
        <begin position="1"/>
        <end position="236"/>
    </location>
</feature>
<feature type="site" description="Transition state stabilizer" evidence="1">
    <location>
        <position position="20"/>
    </location>
</feature>
<feature type="site" description="Transition state stabilizer" evidence="1">
    <location>
        <position position="27"/>
    </location>
</feature>
<feature type="site" description="Positions MEP for the nucleophilic attack" evidence="1">
    <location>
        <position position="157"/>
    </location>
</feature>
<feature type="site" description="Positions MEP for the nucleophilic attack" evidence="1">
    <location>
        <position position="213"/>
    </location>
</feature>